<reference key="1">
    <citation type="journal article" date="1993" name="Biochem. Biophys. Res. Commun.">
        <title>Genomic cloning of the rat histamine H1 receptor.</title>
        <authorList>
            <person name="Fujimoto K."/>
            <person name="Horio Y."/>
            <person name="Sugama K."/>
            <person name="Ito S."/>
            <person name="Liu Y.Q."/>
            <person name="Fukui H."/>
        </authorList>
    </citation>
    <scope>NUCLEOTIDE SEQUENCE [GENOMIC DNA]</scope>
    <scope>FUNCTION</scope>
    <scope>SUBCELLULAR LOCATION</scope>
    <source>
        <strain>Sprague-Dawley</strain>
        <tissue>Liver</tissue>
    </source>
</reference>
<reference key="2">
    <citation type="journal article" date="2012" name="Nat. Commun.">
        <title>Quantitative maps of protein phosphorylation sites across 14 different rat organs and tissues.</title>
        <authorList>
            <person name="Lundby A."/>
            <person name="Secher A."/>
            <person name="Lage K."/>
            <person name="Nordsborg N.B."/>
            <person name="Dmytriyev A."/>
            <person name="Lundby C."/>
            <person name="Olsen J.V."/>
        </authorList>
    </citation>
    <scope>IDENTIFICATION BY MASS SPECTROMETRY [LARGE SCALE ANALYSIS]</scope>
</reference>
<feature type="chain" id="PRO_0000069680" description="Histamine H1 receptor">
    <location>
        <begin position="1"/>
        <end position="486"/>
    </location>
</feature>
<feature type="topological domain" description="Extracellular" evidence="8">
    <location>
        <begin position="1"/>
        <end position="29"/>
    </location>
</feature>
<feature type="transmembrane region" description="Helical; Name=1" evidence="1">
    <location>
        <begin position="30"/>
        <end position="50"/>
    </location>
</feature>
<feature type="topological domain" description="Cytoplasmic" evidence="8">
    <location>
        <begin position="51"/>
        <end position="64"/>
    </location>
</feature>
<feature type="transmembrane region" description="Helical; Name=2" evidence="1">
    <location>
        <begin position="65"/>
        <end position="89"/>
    </location>
</feature>
<feature type="topological domain" description="Extracellular" evidence="8">
    <location>
        <begin position="90"/>
        <end position="97"/>
    </location>
</feature>
<feature type="transmembrane region" description="Helical; Name=3" evidence="1">
    <location>
        <begin position="98"/>
        <end position="123"/>
    </location>
</feature>
<feature type="topological domain" description="Cytoplasmic" evidence="8">
    <location>
        <begin position="124"/>
        <end position="144"/>
    </location>
</feature>
<feature type="transmembrane region" description="Helical; Name=4" evidence="1">
    <location>
        <begin position="145"/>
        <end position="164"/>
    </location>
</feature>
<feature type="topological domain" description="Extracellular" evidence="8">
    <location>
        <begin position="165"/>
        <end position="188"/>
    </location>
</feature>
<feature type="transmembrane region" description="Helical; Name=5" evidence="1">
    <location>
        <begin position="189"/>
        <end position="211"/>
    </location>
</feature>
<feature type="topological domain" description="Cytoplasmic" evidence="8">
    <location>
        <begin position="212"/>
        <end position="415"/>
    </location>
</feature>
<feature type="transmembrane region" description="Helical; Name=6" evidence="1">
    <location>
        <begin position="416"/>
        <end position="439"/>
    </location>
</feature>
<feature type="topological domain" description="Extracellular" evidence="8">
    <location>
        <begin position="440"/>
        <end position="445"/>
    </location>
</feature>
<feature type="transmembrane region" description="Helical; Name=7" evidence="1">
    <location>
        <begin position="446"/>
        <end position="468"/>
    </location>
</feature>
<feature type="topological domain" description="Cytoplasmic" evidence="8">
    <location>
        <begin position="469"/>
        <end position="486"/>
    </location>
</feature>
<feature type="region of interest" description="Important for agonist binding" evidence="1">
    <location>
        <begin position="107"/>
        <end position="112"/>
    </location>
</feature>
<feature type="region of interest" description="Disordered" evidence="5">
    <location>
        <begin position="241"/>
        <end position="295"/>
    </location>
</feature>
<feature type="region of interest" description="Disordered" evidence="5">
    <location>
        <begin position="310"/>
        <end position="379"/>
    </location>
</feature>
<feature type="region of interest" description="Important for agonist binding" evidence="1">
    <location>
        <begin position="423"/>
        <end position="427"/>
    </location>
</feature>
<feature type="compositionally biased region" description="Basic and acidic residues" evidence="5">
    <location>
        <begin position="241"/>
        <end position="253"/>
    </location>
</feature>
<feature type="compositionally biased region" description="Polar residues" evidence="5">
    <location>
        <begin position="347"/>
        <end position="365"/>
    </location>
</feature>
<feature type="binding site" evidence="1">
    <location>
        <position position="107"/>
    </location>
    <ligand>
        <name>histamine</name>
        <dbReference type="ChEBI" id="CHEBI:58432"/>
    </ligand>
</feature>
<feature type="binding site" evidence="1">
    <location>
        <position position="112"/>
    </location>
    <ligand>
        <name>histamine</name>
        <dbReference type="ChEBI" id="CHEBI:58432"/>
    </ligand>
</feature>
<feature type="binding site" evidence="1">
    <location>
        <position position="198"/>
    </location>
    <ligand>
        <name>histamine</name>
        <dbReference type="ChEBI" id="CHEBI:58432"/>
    </ligand>
</feature>
<feature type="binding site" evidence="1">
    <location>
        <position position="430"/>
    </location>
    <ligand>
        <name>histamine</name>
        <dbReference type="ChEBI" id="CHEBI:58432"/>
    </ligand>
</feature>
<feature type="modified residue" description="Phosphothreonine" evidence="1">
    <location>
        <position position="140"/>
    </location>
</feature>
<feature type="modified residue" description="Phosphothreonine" evidence="1">
    <location>
        <position position="142"/>
    </location>
</feature>
<feature type="modified residue" description="Phosphoserine" evidence="1">
    <location>
        <position position="230"/>
    </location>
</feature>
<feature type="modified residue" description="Phosphoserine" evidence="2">
    <location>
        <position position="342"/>
    </location>
</feature>
<feature type="modified residue" description="Phosphoserine" evidence="2">
    <location>
        <position position="345"/>
    </location>
</feature>
<feature type="modified residue" description="Phosphoserine" evidence="2">
    <location>
        <position position="379"/>
    </location>
</feature>
<feature type="modified residue" description="Phosphoserine" evidence="2">
    <location>
        <position position="381"/>
    </location>
</feature>
<feature type="modified residue" description="Phosphoserine" evidence="1">
    <location>
        <position position="395"/>
    </location>
</feature>
<feature type="modified residue" description="Phosphoserine" evidence="1">
    <location>
        <position position="397"/>
    </location>
</feature>
<feature type="glycosylation site" description="N-linked (GlcNAc...) asparagine" evidence="3">
    <location>
        <position position="5"/>
    </location>
</feature>
<feature type="glycosylation site" description="N-linked (GlcNAc...) asparagine" evidence="3">
    <location>
        <position position="18"/>
    </location>
</feature>
<feature type="disulfide bond" evidence="4">
    <location>
        <begin position="100"/>
        <end position="180"/>
    </location>
</feature>
<feature type="disulfide bond" evidence="4">
    <location>
        <begin position="440"/>
        <end position="443"/>
    </location>
</feature>
<protein>
    <recommendedName>
        <fullName evidence="7">Histamine H1 receptor</fullName>
        <shortName evidence="1">H1R</shortName>
        <shortName evidence="1">HH1R</shortName>
    </recommendedName>
</protein>
<keyword id="KW-1003">Cell membrane</keyword>
<keyword id="KW-1015">Disulfide bond</keyword>
<keyword id="KW-0297">G-protein coupled receptor</keyword>
<keyword id="KW-0325">Glycoprotein</keyword>
<keyword id="KW-0472">Membrane</keyword>
<keyword id="KW-0597">Phosphoprotein</keyword>
<keyword id="KW-0675">Receptor</keyword>
<keyword id="KW-1185">Reference proteome</keyword>
<keyword id="KW-0807">Transducer</keyword>
<keyword id="KW-0812">Transmembrane</keyword>
<keyword id="KW-1133">Transmembrane helix</keyword>
<comment type="function">
    <text evidence="2 6">G-protein-coupled receptor for histamine, a biogenic amine that functions as an immune modulator and a neurotransmitter (PubMed:7678492). Through the H1 receptor, histamine mediates the contraction of smooth muscles and increases capillary permeability due to contraction of terminal venules. Also mediates neurotransmission in the central nervous system and thereby regulates circadian rhythms, emotional and locomotor activities as well as cognitive functions (By similarity).</text>
</comment>
<comment type="subcellular location">
    <subcellularLocation>
        <location evidence="6">Cell membrane</location>
        <topology evidence="1">Multi-pass membrane protein</topology>
    </subcellularLocation>
</comment>
<comment type="domain">
    <text evidence="1">Histamine activates the receptor by forming hydrogen bonds with transmembrane domains 3 and 6, squashing the ligand-binding pocket on the extracellular side and opening the cavity for G-protein engagement on the intracellular side.</text>
</comment>
<comment type="PTM">
    <text evidence="1">Phosphorylation at sites in the second and third cytoplasmic loops independently contribute to agonist-induced receptor down-regulation.</text>
</comment>
<comment type="similarity">
    <text evidence="4">Belongs to the G-protein coupled receptor 1 family.</text>
</comment>
<evidence type="ECO:0000250" key="1">
    <source>
        <dbReference type="UniProtKB" id="P35367"/>
    </source>
</evidence>
<evidence type="ECO:0000250" key="2">
    <source>
        <dbReference type="UniProtKB" id="P70174"/>
    </source>
</evidence>
<evidence type="ECO:0000255" key="3"/>
<evidence type="ECO:0000255" key="4">
    <source>
        <dbReference type="PROSITE-ProRule" id="PRU00521"/>
    </source>
</evidence>
<evidence type="ECO:0000256" key="5">
    <source>
        <dbReference type="SAM" id="MobiDB-lite"/>
    </source>
</evidence>
<evidence type="ECO:0000269" key="6">
    <source>
    </source>
</evidence>
<evidence type="ECO:0000303" key="7">
    <source>
    </source>
</evidence>
<evidence type="ECO:0000305" key="8"/>
<evidence type="ECO:0000312" key="9">
    <source>
        <dbReference type="RGD" id="2830"/>
    </source>
</evidence>
<name>HRH1_RAT</name>
<gene>
    <name evidence="9" type="primary">Hrh1</name>
</gene>
<proteinExistence type="evidence at protein level"/>
<accession>P31390</accession>
<sequence length="486" mass="55693">MSFANTSSTFEDKMCEGNRTAMASPQLLPLVVVLSSISLVTVGLNLLVLYAVHSERKLHTVGNLYIVSLSVADLIVGAVVMPMNILYLIMTKWSLGRPLCLFWLSMDYVASTASIFSVFILCIDRYRSVQQPLRYLRYRTKTRASATILGAWFFSFLWVIPILGWHHFMPPAPELREDKCETDFYNVTWFKIMTAIINFYLPTLLMLWFYVKIYKAVRRHCQHRQLTNGSLPSFSELKLRSDDTKEGAKKPGRESPWGVLKRPSRDPSVGLDQKSTSEDPKMTSPTVFSQEGERETRPCFRLDIMQKQSVAEGDVRGSKANDQALSQPKMDEQSLNTCRRISETSEDQTLVDQQSFSRTTDSDTSIEPGPGRVKSRSGSNSGLDYIKITWKRLRSHSRQYVSGLHLNRERKAAKQLGFIMAAFILCWIPYFIFFMVIAFCKSCCSEPMHMFTIWLGYINSTLNPLIYPLCNENFKKTFKKILHIRS</sequence>
<organism>
    <name type="scientific">Rattus norvegicus</name>
    <name type="common">Rat</name>
    <dbReference type="NCBI Taxonomy" id="10116"/>
    <lineage>
        <taxon>Eukaryota</taxon>
        <taxon>Metazoa</taxon>
        <taxon>Chordata</taxon>
        <taxon>Craniata</taxon>
        <taxon>Vertebrata</taxon>
        <taxon>Euteleostomi</taxon>
        <taxon>Mammalia</taxon>
        <taxon>Eutheria</taxon>
        <taxon>Euarchontoglires</taxon>
        <taxon>Glires</taxon>
        <taxon>Rodentia</taxon>
        <taxon>Myomorpha</taxon>
        <taxon>Muroidea</taxon>
        <taxon>Muridae</taxon>
        <taxon>Murinae</taxon>
        <taxon>Rattus</taxon>
    </lineage>
</organism>
<dbReference type="EMBL" id="D12800">
    <property type="protein sequence ID" value="BAA02245.1"/>
    <property type="molecule type" value="Genomic_DNA"/>
</dbReference>
<dbReference type="PIR" id="JC1415">
    <property type="entry name" value="JC1415"/>
</dbReference>
<dbReference type="RefSeq" id="NP_058714.1">
    <property type="nucleotide sequence ID" value="NM_017018.1"/>
</dbReference>
<dbReference type="SMR" id="P31390"/>
<dbReference type="FunCoup" id="P31390">
    <property type="interactions" value="1154"/>
</dbReference>
<dbReference type="STRING" id="10116.ENSRNOP00000009775"/>
<dbReference type="BindingDB" id="P31390"/>
<dbReference type="ChEMBL" id="CHEMBL4701"/>
<dbReference type="DrugCentral" id="P31390"/>
<dbReference type="GlyCosmos" id="P31390">
    <property type="glycosylation" value="2 sites, No reported glycans"/>
</dbReference>
<dbReference type="GlyGen" id="P31390">
    <property type="glycosylation" value="2 sites"/>
</dbReference>
<dbReference type="PhosphoSitePlus" id="P31390"/>
<dbReference type="PaxDb" id="10116-ENSRNOP00000009775"/>
<dbReference type="GeneID" id="24448"/>
<dbReference type="KEGG" id="rno:24448"/>
<dbReference type="UCSC" id="RGD:2830">
    <property type="organism name" value="rat"/>
</dbReference>
<dbReference type="AGR" id="RGD:2830"/>
<dbReference type="CTD" id="3269"/>
<dbReference type="RGD" id="2830">
    <property type="gene designation" value="Hrh1"/>
</dbReference>
<dbReference type="eggNOG" id="KOG4220">
    <property type="taxonomic scope" value="Eukaryota"/>
</dbReference>
<dbReference type="InParanoid" id="P31390"/>
<dbReference type="PhylomeDB" id="P31390"/>
<dbReference type="Reactome" id="R-RNO-390650">
    <property type="pathway name" value="Histamine receptors"/>
</dbReference>
<dbReference type="Reactome" id="R-RNO-416476">
    <property type="pathway name" value="G alpha (q) signalling events"/>
</dbReference>
<dbReference type="PRO" id="PR:P31390"/>
<dbReference type="Proteomes" id="UP000002494">
    <property type="component" value="Unplaced"/>
</dbReference>
<dbReference type="GO" id="GO:0030425">
    <property type="term" value="C:dendrite"/>
    <property type="evidence" value="ECO:0000318"/>
    <property type="project" value="GO_Central"/>
</dbReference>
<dbReference type="GO" id="GO:0005886">
    <property type="term" value="C:plasma membrane"/>
    <property type="evidence" value="ECO:0000250"/>
    <property type="project" value="UniProtKB"/>
</dbReference>
<dbReference type="GO" id="GO:0045202">
    <property type="term" value="C:synapse"/>
    <property type="evidence" value="ECO:0007669"/>
    <property type="project" value="GOC"/>
</dbReference>
<dbReference type="GO" id="GO:0051381">
    <property type="term" value="F:histamine binding"/>
    <property type="evidence" value="ECO:0000315"/>
    <property type="project" value="RGD"/>
</dbReference>
<dbReference type="GO" id="GO:0004969">
    <property type="term" value="F:histamine receptor activity"/>
    <property type="evidence" value="ECO:0000250"/>
    <property type="project" value="UniProtKB"/>
</dbReference>
<dbReference type="GO" id="GO:0071420">
    <property type="term" value="P:cellular response to histamine"/>
    <property type="evidence" value="ECO:0000250"/>
    <property type="project" value="UniProtKB"/>
</dbReference>
<dbReference type="GO" id="GO:0007268">
    <property type="term" value="P:chemical synaptic transmission"/>
    <property type="evidence" value="ECO:0000314"/>
    <property type="project" value="RGD"/>
</dbReference>
<dbReference type="GO" id="GO:0007186">
    <property type="term" value="P:G protein-coupled receptor signaling pathway"/>
    <property type="evidence" value="ECO:0000250"/>
    <property type="project" value="UniProtKB"/>
</dbReference>
<dbReference type="GO" id="GO:0007199">
    <property type="term" value="P:G protein-coupled receptor signaling pathway coupled to cGMP nucleotide second messenger"/>
    <property type="evidence" value="ECO:0000304"/>
    <property type="project" value="RGD"/>
</dbReference>
<dbReference type="GO" id="GO:0007187">
    <property type="term" value="P:G protein-coupled receptor signaling pathway, coupled to cyclic nucleotide second messenger"/>
    <property type="evidence" value="ECO:0000318"/>
    <property type="project" value="GO_Central"/>
</dbReference>
<dbReference type="GO" id="GO:0007613">
    <property type="term" value="P:memory"/>
    <property type="evidence" value="ECO:0000266"/>
    <property type="project" value="RGD"/>
</dbReference>
<dbReference type="GO" id="GO:0010894">
    <property type="term" value="P:negative regulation of steroid biosynthetic process"/>
    <property type="evidence" value="ECO:0000315"/>
    <property type="project" value="RGD"/>
</dbReference>
<dbReference type="GO" id="GO:0045429">
    <property type="term" value="P:positive regulation of nitric oxide biosynthetic process"/>
    <property type="evidence" value="ECO:0000314"/>
    <property type="project" value="RGD"/>
</dbReference>
<dbReference type="GO" id="GO:0045907">
    <property type="term" value="P:positive regulation of vasoconstriction"/>
    <property type="evidence" value="ECO:0000315"/>
    <property type="project" value="RGD"/>
</dbReference>
<dbReference type="GO" id="GO:0048167">
    <property type="term" value="P:regulation of synaptic plasticity"/>
    <property type="evidence" value="ECO:0000266"/>
    <property type="project" value="RGD"/>
</dbReference>
<dbReference type="GO" id="GO:0043114">
    <property type="term" value="P:regulation of vascular permeability"/>
    <property type="evidence" value="ECO:0007669"/>
    <property type="project" value="InterPro"/>
</dbReference>
<dbReference type="GO" id="GO:0009629">
    <property type="term" value="P:response to gravity"/>
    <property type="evidence" value="ECO:0000270"/>
    <property type="project" value="RGD"/>
</dbReference>
<dbReference type="GO" id="GO:0008542">
    <property type="term" value="P:visual learning"/>
    <property type="evidence" value="ECO:0000266"/>
    <property type="project" value="RGD"/>
</dbReference>
<dbReference type="CDD" id="cd15050">
    <property type="entry name" value="7tmA_Histamine_H1R"/>
    <property type="match status" value="1"/>
</dbReference>
<dbReference type="FunFam" id="1.20.1070.10:FF:000147">
    <property type="entry name" value="Histamine H1 receptor"/>
    <property type="match status" value="1"/>
</dbReference>
<dbReference type="FunFam" id="1.20.1070.10:FF:000189">
    <property type="entry name" value="Histamine H1 receptor"/>
    <property type="match status" value="1"/>
</dbReference>
<dbReference type="Gene3D" id="1.20.1070.10">
    <property type="entry name" value="Rhodopsin 7-helix transmembrane proteins"/>
    <property type="match status" value="2"/>
</dbReference>
<dbReference type="InterPro" id="IPR000276">
    <property type="entry name" value="GPCR_Rhodpsn"/>
</dbReference>
<dbReference type="InterPro" id="IPR017452">
    <property type="entry name" value="GPCR_Rhodpsn_7TM"/>
</dbReference>
<dbReference type="InterPro" id="IPR000921">
    <property type="entry name" value="Histamine_H1_rcpt"/>
</dbReference>
<dbReference type="PANTHER" id="PTHR24248">
    <property type="entry name" value="ADRENERGIC RECEPTOR-RELATED G-PROTEIN COUPLED RECEPTOR"/>
    <property type="match status" value="1"/>
</dbReference>
<dbReference type="PANTHER" id="PTHR24248:SF204">
    <property type="entry name" value="HISTAMINE H1 RECEPTOR"/>
    <property type="match status" value="1"/>
</dbReference>
<dbReference type="Pfam" id="PF00001">
    <property type="entry name" value="7tm_1"/>
    <property type="match status" value="1"/>
</dbReference>
<dbReference type="PRINTS" id="PR00237">
    <property type="entry name" value="GPCRRHODOPSN"/>
</dbReference>
<dbReference type="PRINTS" id="PR00530">
    <property type="entry name" value="HISTAMINEH1R"/>
</dbReference>
<dbReference type="SMART" id="SM01381">
    <property type="entry name" value="7TM_GPCR_Srsx"/>
    <property type="match status" value="1"/>
</dbReference>
<dbReference type="SUPFAM" id="SSF81321">
    <property type="entry name" value="Family A G protein-coupled receptor-like"/>
    <property type="match status" value="1"/>
</dbReference>
<dbReference type="PROSITE" id="PS00237">
    <property type="entry name" value="G_PROTEIN_RECEP_F1_1"/>
    <property type="match status" value="1"/>
</dbReference>
<dbReference type="PROSITE" id="PS50262">
    <property type="entry name" value="G_PROTEIN_RECEP_F1_2"/>
    <property type="match status" value="1"/>
</dbReference>